<evidence type="ECO:0000255" key="1">
    <source>
        <dbReference type="HAMAP-Rule" id="MF_01309"/>
    </source>
</evidence>
<evidence type="ECO:0000256" key="2">
    <source>
        <dbReference type="SAM" id="MobiDB-lite"/>
    </source>
</evidence>
<evidence type="ECO:0000305" key="3"/>
<feature type="chain" id="PRO_1000214345" description="Small ribosomal subunit protein uS3">
    <location>
        <begin position="1"/>
        <end position="272"/>
    </location>
</feature>
<feature type="domain" description="KH type-2" evidence="1">
    <location>
        <begin position="43"/>
        <end position="111"/>
    </location>
</feature>
<feature type="region of interest" description="Disordered" evidence="2">
    <location>
        <begin position="218"/>
        <end position="272"/>
    </location>
</feature>
<feature type="compositionally biased region" description="Basic and acidic residues" evidence="2">
    <location>
        <begin position="229"/>
        <end position="238"/>
    </location>
</feature>
<feature type="compositionally biased region" description="Low complexity" evidence="2">
    <location>
        <begin position="253"/>
        <end position="272"/>
    </location>
</feature>
<dbReference type="EMBL" id="CP001628">
    <property type="protein sequence ID" value="ACS31197.1"/>
    <property type="molecule type" value="Genomic_DNA"/>
</dbReference>
<dbReference type="RefSeq" id="WP_002857479.1">
    <property type="nucleotide sequence ID" value="NZ_WBMF01000001.1"/>
</dbReference>
<dbReference type="SMR" id="C5CC56"/>
<dbReference type="STRING" id="465515.Mlut_17100"/>
<dbReference type="EnsemblBacteria" id="ACS31197">
    <property type="protein sequence ID" value="ACS31197"/>
    <property type="gene ID" value="Mlut_17100"/>
</dbReference>
<dbReference type="GeneID" id="93364276"/>
<dbReference type="KEGG" id="mlu:Mlut_17100"/>
<dbReference type="eggNOG" id="COG0092">
    <property type="taxonomic scope" value="Bacteria"/>
</dbReference>
<dbReference type="HOGENOM" id="CLU_058591_0_2_11"/>
<dbReference type="Proteomes" id="UP000000738">
    <property type="component" value="Chromosome"/>
</dbReference>
<dbReference type="GO" id="GO:0022627">
    <property type="term" value="C:cytosolic small ribosomal subunit"/>
    <property type="evidence" value="ECO:0007669"/>
    <property type="project" value="TreeGrafter"/>
</dbReference>
<dbReference type="GO" id="GO:0003729">
    <property type="term" value="F:mRNA binding"/>
    <property type="evidence" value="ECO:0007669"/>
    <property type="project" value="UniProtKB-UniRule"/>
</dbReference>
<dbReference type="GO" id="GO:0019843">
    <property type="term" value="F:rRNA binding"/>
    <property type="evidence" value="ECO:0007669"/>
    <property type="project" value="UniProtKB-UniRule"/>
</dbReference>
<dbReference type="GO" id="GO:0003735">
    <property type="term" value="F:structural constituent of ribosome"/>
    <property type="evidence" value="ECO:0007669"/>
    <property type="project" value="InterPro"/>
</dbReference>
<dbReference type="GO" id="GO:0006412">
    <property type="term" value="P:translation"/>
    <property type="evidence" value="ECO:0007669"/>
    <property type="project" value="UniProtKB-UniRule"/>
</dbReference>
<dbReference type="CDD" id="cd02412">
    <property type="entry name" value="KH-II_30S_S3"/>
    <property type="match status" value="1"/>
</dbReference>
<dbReference type="FunFam" id="3.30.1140.32:FF:000002">
    <property type="entry name" value="30S ribosomal protein S3"/>
    <property type="match status" value="1"/>
</dbReference>
<dbReference type="FunFam" id="3.30.300.20:FF:000001">
    <property type="entry name" value="30S ribosomal protein S3"/>
    <property type="match status" value="1"/>
</dbReference>
<dbReference type="Gene3D" id="3.30.300.20">
    <property type="match status" value="1"/>
</dbReference>
<dbReference type="Gene3D" id="3.30.1140.32">
    <property type="entry name" value="Ribosomal protein S3, C-terminal domain"/>
    <property type="match status" value="1"/>
</dbReference>
<dbReference type="HAMAP" id="MF_01309_B">
    <property type="entry name" value="Ribosomal_uS3_B"/>
    <property type="match status" value="1"/>
</dbReference>
<dbReference type="InterPro" id="IPR004087">
    <property type="entry name" value="KH_dom"/>
</dbReference>
<dbReference type="InterPro" id="IPR015946">
    <property type="entry name" value="KH_dom-like_a/b"/>
</dbReference>
<dbReference type="InterPro" id="IPR004044">
    <property type="entry name" value="KH_dom_type_2"/>
</dbReference>
<dbReference type="InterPro" id="IPR009019">
    <property type="entry name" value="KH_sf_prok-type"/>
</dbReference>
<dbReference type="InterPro" id="IPR036419">
    <property type="entry name" value="Ribosomal_S3_C_sf"/>
</dbReference>
<dbReference type="InterPro" id="IPR005704">
    <property type="entry name" value="Ribosomal_uS3_bac-typ"/>
</dbReference>
<dbReference type="InterPro" id="IPR001351">
    <property type="entry name" value="Ribosomal_uS3_C"/>
</dbReference>
<dbReference type="InterPro" id="IPR018280">
    <property type="entry name" value="Ribosomal_uS3_CS"/>
</dbReference>
<dbReference type="NCBIfam" id="TIGR01009">
    <property type="entry name" value="rpsC_bact"/>
    <property type="match status" value="1"/>
</dbReference>
<dbReference type="PANTHER" id="PTHR11760">
    <property type="entry name" value="30S/40S RIBOSOMAL PROTEIN S3"/>
    <property type="match status" value="1"/>
</dbReference>
<dbReference type="PANTHER" id="PTHR11760:SF19">
    <property type="entry name" value="SMALL RIBOSOMAL SUBUNIT PROTEIN US3C"/>
    <property type="match status" value="1"/>
</dbReference>
<dbReference type="Pfam" id="PF07650">
    <property type="entry name" value="KH_2"/>
    <property type="match status" value="1"/>
</dbReference>
<dbReference type="Pfam" id="PF00189">
    <property type="entry name" value="Ribosomal_S3_C"/>
    <property type="match status" value="1"/>
</dbReference>
<dbReference type="SMART" id="SM00322">
    <property type="entry name" value="KH"/>
    <property type="match status" value="1"/>
</dbReference>
<dbReference type="SUPFAM" id="SSF54814">
    <property type="entry name" value="Prokaryotic type KH domain (KH-domain type II)"/>
    <property type="match status" value="1"/>
</dbReference>
<dbReference type="SUPFAM" id="SSF54821">
    <property type="entry name" value="Ribosomal protein S3 C-terminal domain"/>
    <property type="match status" value="1"/>
</dbReference>
<dbReference type="PROSITE" id="PS50823">
    <property type="entry name" value="KH_TYPE_2"/>
    <property type="match status" value="1"/>
</dbReference>
<dbReference type="PROSITE" id="PS00548">
    <property type="entry name" value="RIBOSOMAL_S3"/>
    <property type="match status" value="1"/>
</dbReference>
<comment type="function">
    <text evidence="1">Binds the lower part of the 30S subunit head. Binds mRNA in the 70S ribosome, positioning it for translation.</text>
</comment>
<comment type="subunit">
    <text evidence="1">Part of the 30S ribosomal subunit. Forms a tight complex with proteins S10 and S14.</text>
</comment>
<comment type="similarity">
    <text evidence="1">Belongs to the universal ribosomal protein uS3 family.</text>
</comment>
<protein>
    <recommendedName>
        <fullName evidence="1">Small ribosomal subunit protein uS3</fullName>
    </recommendedName>
    <alternativeName>
        <fullName evidence="3">30S ribosomal protein S3</fullName>
    </alternativeName>
</protein>
<proteinExistence type="inferred from homology"/>
<name>RS3_MICLC</name>
<sequence length="272" mass="29937">MGQKINPNGFRLGITTDHVSHWFADSHKEGQRYADFLKEDVKIRELMTTGMERAGISKVEIERTRDRVRVDIHTARPGIVIGRRGAEADRIRGELEKLTGKQIQLNILEVKNPETDAQLVAQGVAEQLASRVAFRRAMKKAIQSAMRAGAQGIRIQCSGRLGGAEMSRSEFYREGRVPLHTLRANIDFGKFEAKTTFGRIGVKVWIYKGDLTAKELAAKEAAQPSGRGRGGERRGGGERRRRNDRAERAPRQENAGAGAETPAAAPAEGGNA</sequence>
<reference key="1">
    <citation type="journal article" date="2010" name="J. Bacteriol.">
        <title>Genome sequence of the Fleming strain of Micrococcus luteus, a simple free-living actinobacterium.</title>
        <authorList>
            <person name="Young M."/>
            <person name="Artsatbanov V."/>
            <person name="Beller H.R."/>
            <person name="Chandra G."/>
            <person name="Chater K.F."/>
            <person name="Dover L.G."/>
            <person name="Goh E.B."/>
            <person name="Kahan T."/>
            <person name="Kaprelyants A.S."/>
            <person name="Kyrpides N."/>
            <person name="Lapidus A."/>
            <person name="Lowry S.R."/>
            <person name="Lykidis A."/>
            <person name="Mahillon J."/>
            <person name="Markowitz V."/>
            <person name="Mavromatis K."/>
            <person name="Mukamolova G.V."/>
            <person name="Oren A."/>
            <person name="Rokem J.S."/>
            <person name="Smith M.C."/>
            <person name="Young D.I."/>
            <person name="Greenblatt C.L."/>
        </authorList>
    </citation>
    <scope>NUCLEOTIDE SEQUENCE [LARGE SCALE GENOMIC DNA]</scope>
    <source>
        <strain>ATCC 4698 / DSM 20030 / JCM 1464 / CCM 169 / CCUG 5858 / IAM 1056 / NBRC 3333 / NCIMB 9278 / NCTC 2665 / VKM Ac-2230</strain>
    </source>
</reference>
<keyword id="KW-1185">Reference proteome</keyword>
<keyword id="KW-0687">Ribonucleoprotein</keyword>
<keyword id="KW-0689">Ribosomal protein</keyword>
<keyword id="KW-0694">RNA-binding</keyword>
<keyword id="KW-0699">rRNA-binding</keyword>
<accession>C5CC56</accession>
<gene>
    <name evidence="1" type="primary">rpsC</name>
    <name type="ordered locus">Mlut_17100</name>
</gene>
<organism>
    <name type="scientific">Micrococcus luteus (strain ATCC 4698 / DSM 20030 / JCM 1464 / CCM 169 / CCUG 5858 / IAM 1056 / NBRC 3333 / NCIMB 9278 / NCTC 2665 / VKM Ac-2230)</name>
    <name type="common">Micrococcus lysodeikticus</name>
    <dbReference type="NCBI Taxonomy" id="465515"/>
    <lineage>
        <taxon>Bacteria</taxon>
        <taxon>Bacillati</taxon>
        <taxon>Actinomycetota</taxon>
        <taxon>Actinomycetes</taxon>
        <taxon>Micrococcales</taxon>
        <taxon>Micrococcaceae</taxon>
        <taxon>Micrococcus</taxon>
    </lineage>
</organism>